<comment type="subcellular location">
    <subcellularLocation>
        <location evidence="2">Cell membrane</location>
        <topology evidence="1">Single-pass membrane protein</topology>
    </subcellularLocation>
</comment>
<comment type="similarity">
    <text evidence="2">Belongs to the MmpS family.</text>
</comment>
<name>MMPS5_MYCBO</name>
<proteinExistence type="inferred from homology"/>
<dbReference type="EMBL" id="LT708304">
    <property type="protein sequence ID" value="SIT99294.1"/>
    <property type="molecule type" value="Genomic_DNA"/>
</dbReference>
<dbReference type="RefSeq" id="NP_854354.1">
    <property type="nucleotide sequence ID" value="NC_002945.3"/>
</dbReference>
<dbReference type="RefSeq" id="WP_003403439.1">
    <property type="nucleotide sequence ID" value="NC_002945.4"/>
</dbReference>
<dbReference type="SMR" id="P65381"/>
<dbReference type="TCDB" id="8.A.35.1.2">
    <property type="family name" value="the mycobacterial membrane protein small (mmps) family"/>
</dbReference>
<dbReference type="GeneID" id="45424639"/>
<dbReference type="KEGG" id="mbo:BQ2027_MB0696C"/>
<dbReference type="PATRIC" id="fig|233413.5.peg.758"/>
<dbReference type="Proteomes" id="UP000001419">
    <property type="component" value="Chromosome"/>
</dbReference>
<dbReference type="GO" id="GO:0005886">
    <property type="term" value="C:plasma membrane"/>
    <property type="evidence" value="ECO:0007669"/>
    <property type="project" value="UniProtKB-SubCell"/>
</dbReference>
<dbReference type="Gene3D" id="2.60.40.2880">
    <property type="entry name" value="MmpS1-5, C-terminal soluble domain"/>
    <property type="match status" value="1"/>
</dbReference>
<dbReference type="InterPro" id="IPR008693">
    <property type="entry name" value="MmpS"/>
</dbReference>
<dbReference type="InterPro" id="IPR038468">
    <property type="entry name" value="MmpS_C"/>
</dbReference>
<dbReference type="Pfam" id="PF05423">
    <property type="entry name" value="Mycobact_memb"/>
    <property type="match status" value="1"/>
</dbReference>
<evidence type="ECO:0000255" key="1"/>
<evidence type="ECO:0000305" key="2"/>
<organism>
    <name type="scientific">Mycobacterium bovis (strain ATCC BAA-935 / AF2122/97)</name>
    <dbReference type="NCBI Taxonomy" id="233413"/>
    <lineage>
        <taxon>Bacteria</taxon>
        <taxon>Bacillati</taxon>
        <taxon>Actinomycetota</taxon>
        <taxon>Actinomycetes</taxon>
        <taxon>Mycobacteriales</taxon>
        <taxon>Mycobacteriaceae</taxon>
        <taxon>Mycobacterium</taxon>
        <taxon>Mycobacterium tuberculosis complex</taxon>
    </lineage>
</organism>
<protein>
    <recommendedName>
        <fullName evidence="2">Probable transport accessory protein MmpS5</fullName>
    </recommendedName>
</protein>
<gene>
    <name type="primary">mmpS5</name>
    <name type="ordered locus">BQ2027_MB0696C</name>
</gene>
<accession>P65381</accession>
<accession>A0A1R3XW68</accession>
<accession>O53785</accession>
<accession>X2BFV2</accession>
<reference key="1">
    <citation type="journal article" date="2003" name="Proc. Natl. Acad. Sci. U.S.A.">
        <title>The complete genome sequence of Mycobacterium bovis.</title>
        <authorList>
            <person name="Garnier T."/>
            <person name="Eiglmeier K."/>
            <person name="Camus J.-C."/>
            <person name="Medina N."/>
            <person name="Mansoor H."/>
            <person name="Pryor M."/>
            <person name="Duthoy S."/>
            <person name="Grondin S."/>
            <person name="Lacroix C."/>
            <person name="Monsempe C."/>
            <person name="Simon S."/>
            <person name="Harris B."/>
            <person name="Atkin R."/>
            <person name="Doggett J."/>
            <person name="Mayes R."/>
            <person name="Keating L."/>
            <person name="Wheeler P.R."/>
            <person name="Parkhill J."/>
            <person name="Barrell B.G."/>
            <person name="Cole S.T."/>
            <person name="Gordon S.V."/>
            <person name="Hewinson R.G."/>
        </authorList>
    </citation>
    <scope>NUCLEOTIDE SEQUENCE [LARGE SCALE GENOMIC DNA]</scope>
    <source>
        <strain>ATCC BAA-935 / AF2122/97</strain>
    </source>
</reference>
<reference key="2">
    <citation type="journal article" date="2017" name="Genome Announc.">
        <title>Updated reference genome sequence and annotation of Mycobacterium bovis AF2122/97.</title>
        <authorList>
            <person name="Malone K.M."/>
            <person name="Farrell D."/>
            <person name="Stuber T.P."/>
            <person name="Schubert O.T."/>
            <person name="Aebersold R."/>
            <person name="Robbe-Austerman S."/>
            <person name="Gordon S.V."/>
        </authorList>
    </citation>
    <scope>NUCLEOTIDE SEQUENCE [LARGE SCALE GENOMIC DNA]</scope>
    <scope>GENOME REANNOTATION</scope>
    <source>
        <strain>ATCC BAA-935 / AF2122/97</strain>
    </source>
</reference>
<sequence length="142" mass="15249">MIGTLKRAWIPLLILVVVAIAGFTVQRIRTFFGSEGILVTPKVFADDPEPFDPKVVEYEVSGSGSYVNINYLDLDAKPQRIDGAALPWSLTLKTTAPSAAPNILAQGDGTSITCRITVDGEVKDERTATGVDALTYCFVKSA</sequence>
<keyword id="KW-1003">Cell membrane</keyword>
<keyword id="KW-0472">Membrane</keyword>
<keyword id="KW-1185">Reference proteome</keyword>
<keyword id="KW-0812">Transmembrane</keyword>
<keyword id="KW-1133">Transmembrane helix</keyword>
<feature type="chain" id="PRO_0000216159" description="Probable transport accessory protein MmpS5">
    <location>
        <begin position="1"/>
        <end position="142"/>
    </location>
</feature>
<feature type="transmembrane region" description="Helical" evidence="1">
    <location>
        <begin position="7"/>
        <end position="26"/>
    </location>
</feature>